<name>RPC7_SCHPO</name>
<organism>
    <name type="scientific">Schizosaccharomyces pombe (strain 972 / ATCC 24843)</name>
    <name type="common">Fission yeast</name>
    <dbReference type="NCBI Taxonomy" id="284812"/>
    <lineage>
        <taxon>Eukaryota</taxon>
        <taxon>Fungi</taxon>
        <taxon>Dikarya</taxon>
        <taxon>Ascomycota</taxon>
        <taxon>Taphrinomycotina</taxon>
        <taxon>Schizosaccharomycetes</taxon>
        <taxon>Schizosaccharomycetales</taxon>
        <taxon>Schizosaccharomycetaceae</taxon>
        <taxon>Schizosaccharomyces</taxon>
    </lineage>
</organism>
<reference key="1">
    <citation type="journal article" date="2006" name="Nucleic Acids Res.">
        <title>Ancient origin, functional conservation and fast evolution of DNA-dependent RNA polymerase III.</title>
        <authorList>
            <person name="Proshkina G.M."/>
            <person name="Shematorova E.K."/>
            <person name="Proshkin S.A."/>
            <person name="Zaros C."/>
            <person name="Thuriaux P."/>
            <person name="Shpakovski G.V."/>
        </authorList>
    </citation>
    <scope>NUCLEOTIDE SEQUENCE [MRNA]</scope>
    <scope>FUNCTION</scope>
    <source>
        <strain>972 / ATCC 24843</strain>
    </source>
</reference>
<reference key="2">
    <citation type="journal article" date="2002" name="Nature">
        <title>The genome sequence of Schizosaccharomyces pombe.</title>
        <authorList>
            <person name="Wood V."/>
            <person name="Gwilliam R."/>
            <person name="Rajandream M.A."/>
            <person name="Lyne M.H."/>
            <person name="Lyne R."/>
            <person name="Stewart A."/>
            <person name="Sgouros J.G."/>
            <person name="Peat N."/>
            <person name="Hayles J."/>
            <person name="Baker S.G."/>
            <person name="Basham D."/>
            <person name="Bowman S."/>
            <person name="Brooks K."/>
            <person name="Brown D."/>
            <person name="Brown S."/>
            <person name="Chillingworth T."/>
            <person name="Churcher C.M."/>
            <person name="Collins M."/>
            <person name="Connor R."/>
            <person name="Cronin A."/>
            <person name="Davis P."/>
            <person name="Feltwell T."/>
            <person name="Fraser A."/>
            <person name="Gentles S."/>
            <person name="Goble A."/>
            <person name="Hamlin N."/>
            <person name="Harris D.E."/>
            <person name="Hidalgo J."/>
            <person name="Hodgson G."/>
            <person name="Holroyd S."/>
            <person name="Hornsby T."/>
            <person name="Howarth S."/>
            <person name="Huckle E.J."/>
            <person name="Hunt S."/>
            <person name="Jagels K."/>
            <person name="James K.D."/>
            <person name="Jones L."/>
            <person name="Jones M."/>
            <person name="Leather S."/>
            <person name="McDonald S."/>
            <person name="McLean J."/>
            <person name="Mooney P."/>
            <person name="Moule S."/>
            <person name="Mungall K.L."/>
            <person name="Murphy L.D."/>
            <person name="Niblett D."/>
            <person name="Odell C."/>
            <person name="Oliver K."/>
            <person name="O'Neil S."/>
            <person name="Pearson D."/>
            <person name="Quail M.A."/>
            <person name="Rabbinowitsch E."/>
            <person name="Rutherford K.M."/>
            <person name="Rutter S."/>
            <person name="Saunders D."/>
            <person name="Seeger K."/>
            <person name="Sharp S."/>
            <person name="Skelton J."/>
            <person name="Simmonds M.N."/>
            <person name="Squares R."/>
            <person name="Squares S."/>
            <person name="Stevens K."/>
            <person name="Taylor K."/>
            <person name="Taylor R.G."/>
            <person name="Tivey A."/>
            <person name="Walsh S.V."/>
            <person name="Warren T."/>
            <person name="Whitehead S."/>
            <person name="Woodward J.R."/>
            <person name="Volckaert G."/>
            <person name="Aert R."/>
            <person name="Robben J."/>
            <person name="Grymonprez B."/>
            <person name="Weltjens I."/>
            <person name="Vanstreels E."/>
            <person name="Rieger M."/>
            <person name="Schaefer M."/>
            <person name="Mueller-Auer S."/>
            <person name="Gabel C."/>
            <person name="Fuchs M."/>
            <person name="Duesterhoeft A."/>
            <person name="Fritzc C."/>
            <person name="Holzer E."/>
            <person name="Moestl D."/>
            <person name="Hilbert H."/>
            <person name="Borzym K."/>
            <person name="Langer I."/>
            <person name="Beck A."/>
            <person name="Lehrach H."/>
            <person name="Reinhardt R."/>
            <person name="Pohl T.M."/>
            <person name="Eger P."/>
            <person name="Zimmermann W."/>
            <person name="Wedler H."/>
            <person name="Wambutt R."/>
            <person name="Purnelle B."/>
            <person name="Goffeau A."/>
            <person name="Cadieu E."/>
            <person name="Dreano S."/>
            <person name="Gloux S."/>
            <person name="Lelaure V."/>
            <person name="Mottier S."/>
            <person name="Galibert F."/>
            <person name="Aves S.J."/>
            <person name="Xiang Z."/>
            <person name="Hunt C."/>
            <person name="Moore K."/>
            <person name="Hurst S.M."/>
            <person name="Lucas M."/>
            <person name="Rochet M."/>
            <person name="Gaillardin C."/>
            <person name="Tallada V.A."/>
            <person name="Garzon A."/>
            <person name="Thode G."/>
            <person name="Daga R.R."/>
            <person name="Cruzado L."/>
            <person name="Jimenez J."/>
            <person name="Sanchez M."/>
            <person name="del Rey F."/>
            <person name="Benito J."/>
            <person name="Dominguez A."/>
            <person name="Revuelta J.L."/>
            <person name="Moreno S."/>
            <person name="Armstrong J."/>
            <person name="Forsburg S.L."/>
            <person name="Cerutti L."/>
            <person name="Lowe T."/>
            <person name="McCombie W.R."/>
            <person name="Paulsen I."/>
            <person name="Potashkin J."/>
            <person name="Shpakovski G.V."/>
            <person name="Ussery D."/>
            <person name="Barrell B.G."/>
            <person name="Nurse P."/>
        </authorList>
    </citation>
    <scope>NUCLEOTIDE SEQUENCE [LARGE SCALE GENOMIC DNA]</scope>
    <source>
        <strain>972 / ATCC 24843</strain>
    </source>
</reference>
<reference key="3">
    <citation type="journal article" date="2006" name="Nat. Biotechnol.">
        <title>ORFeome cloning and global analysis of protein localization in the fission yeast Schizosaccharomyces pombe.</title>
        <authorList>
            <person name="Matsuyama A."/>
            <person name="Arai R."/>
            <person name="Yashiroda Y."/>
            <person name="Shirai A."/>
            <person name="Kamata A."/>
            <person name="Sekido S."/>
            <person name="Kobayashi Y."/>
            <person name="Hashimoto A."/>
            <person name="Hamamoto M."/>
            <person name="Hiraoka Y."/>
            <person name="Horinouchi S."/>
            <person name="Yoshida M."/>
        </authorList>
    </citation>
    <scope>SUBCELLULAR LOCATION [LARGE SCALE ANALYSIS]</scope>
</reference>
<reference key="4">
    <citation type="journal article" date="2008" name="J. Proteome Res.">
        <title>Phosphoproteome analysis of fission yeast.</title>
        <authorList>
            <person name="Wilson-Grady J.T."/>
            <person name="Villen J."/>
            <person name="Gygi S.P."/>
        </authorList>
    </citation>
    <scope>PHOSPHORYLATION [LARGE SCALE ANALYSIS] AT SER-103</scope>
    <scope>IDENTIFICATION BY MASS SPECTROMETRY</scope>
</reference>
<comment type="function">
    <text evidence="3">DNA-dependent RNA polymerase catalyzes the transcription of DNA into RNA using the four ribonucleoside triphosphates as substrates. Specific peripheric component of RNA polymerase III which synthesizes small RNAs, such as 5S rRNA and tRNAs.</text>
</comment>
<comment type="subunit">
    <text>Component of the RNA polymerase III (Pol III) complex.</text>
</comment>
<comment type="subcellular location">
    <subcellularLocation>
        <location evidence="2">Cytoplasm</location>
    </subcellularLocation>
    <subcellularLocation>
        <location evidence="2">Nucleus</location>
    </subcellularLocation>
</comment>
<comment type="similarity">
    <text evidence="5">Belongs to the eukaryotic RPC7 RNA polymerase subunit family.</text>
</comment>
<accession>Q8WZJ8</accession>
<evidence type="ECO:0000256" key="1">
    <source>
        <dbReference type="SAM" id="MobiDB-lite"/>
    </source>
</evidence>
<evidence type="ECO:0000269" key="2">
    <source>
    </source>
</evidence>
<evidence type="ECO:0000269" key="3">
    <source>
    </source>
</evidence>
<evidence type="ECO:0000269" key="4">
    <source>
    </source>
</evidence>
<evidence type="ECO:0000305" key="5"/>
<proteinExistence type="evidence at protein level"/>
<gene>
    <name type="primary">rpc31</name>
    <name type="ORF">SPBC839.12</name>
</gene>
<feature type="chain" id="PRO_0000352832" description="DNA-directed RNA polymerase III subunit rpc31">
    <location>
        <begin position="1"/>
        <end position="210"/>
    </location>
</feature>
<feature type="region of interest" description="Disordered" evidence="1">
    <location>
        <begin position="151"/>
        <end position="210"/>
    </location>
</feature>
<feature type="compositionally biased region" description="Acidic residues" evidence="1">
    <location>
        <begin position="163"/>
        <end position="185"/>
    </location>
</feature>
<feature type="compositionally biased region" description="Acidic residues" evidence="1">
    <location>
        <begin position="193"/>
        <end position="210"/>
    </location>
</feature>
<feature type="modified residue" description="Phosphoserine" evidence="4">
    <location>
        <position position="103"/>
    </location>
</feature>
<keyword id="KW-0963">Cytoplasm</keyword>
<keyword id="KW-0240">DNA-directed RNA polymerase</keyword>
<keyword id="KW-0539">Nucleus</keyword>
<keyword id="KW-0597">Phosphoprotein</keyword>
<keyword id="KW-1185">Reference proteome</keyword>
<keyword id="KW-0804">Transcription</keyword>
<dbReference type="EMBL" id="DQ156222">
    <property type="protein sequence ID" value="ABA54850.1"/>
    <property type="molecule type" value="mRNA"/>
</dbReference>
<dbReference type="EMBL" id="CU329671">
    <property type="protein sequence ID" value="CAB46705.1"/>
    <property type="molecule type" value="Genomic_DNA"/>
</dbReference>
<dbReference type="PIR" id="T40719">
    <property type="entry name" value="T40719"/>
</dbReference>
<dbReference type="RefSeq" id="NP_595252.1">
    <property type="nucleotide sequence ID" value="NM_001021158.2"/>
</dbReference>
<dbReference type="BioGRID" id="277711">
    <property type="interactions" value="7"/>
</dbReference>
<dbReference type="ComplexPortal" id="CPX-8905">
    <property type="entry name" value="DNA-directed RNA polymerase III complex"/>
</dbReference>
<dbReference type="FunCoup" id="Q8WZJ8">
    <property type="interactions" value="28"/>
</dbReference>
<dbReference type="STRING" id="284812.Q8WZJ8"/>
<dbReference type="iPTMnet" id="Q8WZJ8"/>
<dbReference type="PaxDb" id="4896-SPBC839.12.1"/>
<dbReference type="EnsemblFungi" id="SPBC839.12.1">
    <property type="protein sequence ID" value="SPBC839.12.1:pep"/>
    <property type="gene ID" value="SPBC839.12"/>
</dbReference>
<dbReference type="GeneID" id="2541197"/>
<dbReference type="KEGG" id="spo:2541197"/>
<dbReference type="PomBase" id="SPBC839.12">
    <property type="gene designation" value="rpc31"/>
</dbReference>
<dbReference type="VEuPathDB" id="FungiDB:SPBC839.12"/>
<dbReference type="eggNOG" id="ENOG502SEZJ">
    <property type="taxonomic scope" value="Eukaryota"/>
</dbReference>
<dbReference type="HOGENOM" id="CLU_1327066_0_0_1"/>
<dbReference type="InParanoid" id="Q8WZJ8"/>
<dbReference type="OMA" id="TFIDFTI"/>
<dbReference type="PhylomeDB" id="Q8WZJ8"/>
<dbReference type="Reactome" id="R-SPO-76061">
    <property type="pathway name" value="RNA Polymerase III Transcription Initiation From Type 1 Promoter"/>
</dbReference>
<dbReference type="Reactome" id="R-SPO-76066">
    <property type="pathway name" value="RNA Polymerase III Transcription Initiation From Type 2 Promoter"/>
</dbReference>
<dbReference type="PRO" id="PR:Q8WZJ8"/>
<dbReference type="Proteomes" id="UP000002485">
    <property type="component" value="Chromosome II"/>
</dbReference>
<dbReference type="GO" id="GO:0005829">
    <property type="term" value="C:cytosol"/>
    <property type="evidence" value="ECO:0007005"/>
    <property type="project" value="PomBase"/>
</dbReference>
<dbReference type="GO" id="GO:0005634">
    <property type="term" value="C:nucleus"/>
    <property type="evidence" value="ECO:0007005"/>
    <property type="project" value="PomBase"/>
</dbReference>
<dbReference type="GO" id="GO:0005666">
    <property type="term" value="C:RNA polymerase III complex"/>
    <property type="evidence" value="ECO:0000318"/>
    <property type="project" value="GO_Central"/>
</dbReference>
<dbReference type="GO" id="GO:0003899">
    <property type="term" value="F:DNA-directed RNA polymerase activity"/>
    <property type="evidence" value="ECO:0000266"/>
    <property type="project" value="PomBase"/>
</dbReference>
<dbReference type="GO" id="GO:0006383">
    <property type="term" value="P:transcription by RNA polymerase III"/>
    <property type="evidence" value="ECO:0000266"/>
    <property type="project" value="PomBase"/>
</dbReference>
<dbReference type="InterPro" id="IPR024661">
    <property type="entry name" value="RNA_pol_III_Rpc31"/>
</dbReference>
<dbReference type="PANTHER" id="PTHR15367">
    <property type="entry name" value="DNA-DIRECTED RNA POLYMERASE III"/>
    <property type="match status" value="1"/>
</dbReference>
<dbReference type="PANTHER" id="PTHR15367:SF2">
    <property type="entry name" value="DNA-DIRECTED RNA POLYMERASE III SUBUNIT"/>
    <property type="match status" value="1"/>
</dbReference>
<dbReference type="Pfam" id="PF11705">
    <property type="entry name" value="RNA_pol_3_Rpc31"/>
    <property type="match status" value="1"/>
</dbReference>
<dbReference type="PIRSF" id="PIRSF000777">
    <property type="entry name" value="RNA_polIII_C31"/>
    <property type="match status" value="1"/>
</dbReference>
<protein>
    <recommendedName>
        <fullName>DNA-directed RNA polymerase III subunit rpc31</fullName>
        <shortName>RNA polymerase III subunit C31</shortName>
    </recommendedName>
    <alternativeName>
        <fullName>DNA-directed RNA polymerase III 31 kDa polypeptide</fullName>
    </alternativeName>
</protein>
<sequence length="210" mass="24342">MRRGARGSTNLGGMTWQEVLEFNANSTPTKLYPDRDIPLQRSIRPEELLELRFYKEIRTSFLDESAFYIRRNPISVVQRNEDGLVRYSDRNKPKRKNDNLSLSDLDLDPKFFPEELRKTLGAASATGRKRARRKLDMKTFIDFTIKAQDLKDESSEAAHPNIEEEPDEGLEEEDEDFGDDDDNDYGENYFDNGEGDDYDDYDGDEGAIYE</sequence>